<dbReference type="EMBL" id="CP000099">
    <property type="protein sequence ID" value="AAZ69476.1"/>
    <property type="molecule type" value="Genomic_DNA"/>
</dbReference>
<dbReference type="SMR" id="Q46F66"/>
<dbReference type="STRING" id="269797.Mbar_A0494"/>
<dbReference type="PaxDb" id="269797-Mbar_A0494"/>
<dbReference type="KEGG" id="mba:Mbar_A0494"/>
<dbReference type="eggNOG" id="arCOG04701">
    <property type="taxonomic scope" value="Archaea"/>
</dbReference>
<dbReference type="HOGENOM" id="CLU_114342_1_4_2"/>
<dbReference type="OrthoDB" id="253428at2157"/>
<dbReference type="GO" id="GO:0005886">
    <property type="term" value="C:plasma membrane"/>
    <property type="evidence" value="ECO:0007669"/>
    <property type="project" value="UniProtKB-SubCell"/>
</dbReference>
<dbReference type="GO" id="GO:0062054">
    <property type="term" value="F:fluoride channel activity"/>
    <property type="evidence" value="ECO:0007669"/>
    <property type="project" value="UniProtKB-UniRule"/>
</dbReference>
<dbReference type="GO" id="GO:0046872">
    <property type="term" value="F:metal ion binding"/>
    <property type="evidence" value="ECO:0007669"/>
    <property type="project" value="UniProtKB-KW"/>
</dbReference>
<dbReference type="GO" id="GO:0140114">
    <property type="term" value="P:cellular detoxification of fluoride"/>
    <property type="evidence" value="ECO:0007669"/>
    <property type="project" value="UniProtKB-UniRule"/>
</dbReference>
<dbReference type="HAMAP" id="MF_00454">
    <property type="entry name" value="FluC"/>
    <property type="match status" value="1"/>
</dbReference>
<dbReference type="InterPro" id="IPR003691">
    <property type="entry name" value="FluC"/>
</dbReference>
<dbReference type="NCBIfam" id="NF010820">
    <property type="entry name" value="PRK14224.1"/>
    <property type="match status" value="1"/>
</dbReference>
<dbReference type="Pfam" id="PF02537">
    <property type="entry name" value="CRCB"/>
    <property type="match status" value="1"/>
</dbReference>
<protein>
    <recommendedName>
        <fullName evidence="1">Fluoride-specific ion channel FluC 2</fullName>
    </recommendedName>
</protein>
<accession>Q46F66</accession>
<evidence type="ECO:0000255" key="1">
    <source>
        <dbReference type="HAMAP-Rule" id="MF_00454"/>
    </source>
</evidence>
<sequence length="126" mass="13674">MSSTYKDLDKIFLIGAGGFLGAICRFSLCELMESYYGTLSVNVLGSFMLGLIMYDTEYIGFIGPKGKLAFGTGFMGAFTTFSTFAVQSFTMPFFPALENISVNLFLALVGVFMGRSTIKALSGREV</sequence>
<comment type="function">
    <text evidence="1">Fluoride-specific ion channel. Important for reducing fluoride concentration in the cell, thus reducing its toxicity.</text>
</comment>
<comment type="catalytic activity">
    <reaction evidence="1">
        <text>fluoride(in) = fluoride(out)</text>
        <dbReference type="Rhea" id="RHEA:76159"/>
        <dbReference type="ChEBI" id="CHEBI:17051"/>
    </reaction>
    <physiologicalReaction direction="left-to-right" evidence="1">
        <dbReference type="Rhea" id="RHEA:76160"/>
    </physiologicalReaction>
</comment>
<comment type="activity regulation">
    <text evidence="1">Na(+) is not transported, but it plays an essential structural role and its presence is essential for fluoride channel function.</text>
</comment>
<comment type="subcellular location">
    <subcellularLocation>
        <location evidence="1">Cell membrane</location>
        <topology evidence="1">Multi-pass membrane protein</topology>
    </subcellularLocation>
</comment>
<comment type="similarity">
    <text evidence="1">Belongs to the fluoride channel Fluc/FEX (TC 1.A.43) family.</text>
</comment>
<organism>
    <name type="scientific">Methanosarcina barkeri (strain Fusaro / DSM 804)</name>
    <dbReference type="NCBI Taxonomy" id="269797"/>
    <lineage>
        <taxon>Archaea</taxon>
        <taxon>Methanobacteriati</taxon>
        <taxon>Methanobacteriota</taxon>
        <taxon>Stenosarchaea group</taxon>
        <taxon>Methanomicrobia</taxon>
        <taxon>Methanosarcinales</taxon>
        <taxon>Methanosarcinaceae</taxon>
        <taxon>Methanosarcina</taxon>
    </lineage>
</organism>
<reference key="1">
    <citation type="journal article" date="2006" name="J. Bacteriol.">
        <title>The Methanosarcina barkeri genome: comparative analysis with Methanosarcina acetivorans and Methanosarcina mazei reveals extensive rearrangement within methanosarcinal genomes.</title>
        <authorList>
            <person name="Maeder D.L."/>
            <person name="Anderson I."/>
            <person name="Brettin T.S."/>
            <person name="Bruce D.C."/>
            <person name="Gilna P."/>
            <person name="Han C.S."/>
            <person name="Lapidus A."/>
            <person name="Metcalf W.W."/>
            <person name="Saunders E."/>
            <person name="Tapia R."/>
            <person name="Sowers K.R."/>
        </authorList>
    </citation>
    <scope>NUCLEOTIDE SEQUENCE [LARGE SCALE GENOMIC DNA]</scope>
    <source>
        <strain>Fusaro / DSM 804</strain>
    </source>
</reference>
<keyword id="KW-1003">Cell membrane</keyword>
<keyword id="KW-0407">Ion channel</keyword>
<keyword id="KW-0406">Ion transport</keyword>
<keyword id="KW-0472">Membrane</keyword>
<keyword id="KW-0479">Metal-binding</keyword>
<keyword id="KW-0915">Sodium</keyword>
<keyword id="KW-0812">Transmembrane</keyword>
<keyword id="KW-1133">Transmembrane helix</keyword>
<keyword id="KW-0813">Transport</keyword>
<feature type="chain" id="PRO_0000252963" description="Fluoride-specific ion channel FluC 2">
    <location>
        <begin position="1"/>
        <end position="126"/>
    </location>
</feature>
<feature type="transmembrane region" description="Helical" evidence="1">
    <location>
        <begin position="11"/>
        <end position="31"/>
    </location>
</feature>
<feature type="transmembrane region" description="Helical" evidence="1">
    <location>
        <begin position="43"/>
        <end position="63"/>
    </location>
</feature>
<feature type="transmembrane region" description="Helical" evidence="1">
    <location>
        <begin position="69"/>
        <end position="89"/>
    </location>
</feature>
<feature type="transmembrane region" description="Helical" evidence="1">
    <location>
        <begin position="93"/>
        <end position="113"/>
    </location>
</feature>
<feature type="binding site" evidence="1">
    <location>
        <position position="76"/>
    </location>
    <ligand>
        <name>Na(+)</name>
        <dbReference type="ChEBI" id="CHEBI:29101"/>
        <note>structural</note>
    </ligand>
</feature>
<feature type="binding site" evidence="1">
    <location>
        <position position="79"/>
    </location>
    <ligand>
        <name>Na(+)</name>
        <dbReference type="ChEBI" id="CHEBI:29101"/>
        <note>structural</note>
    </ligand>
</feature>
<proteinExistence type="inferred from homology"/>
<gene>
    <name evidence="1" type="primary">fluC2</name>
    <name evidence="1" type="synonym">crcB2</name>
    <name type="ordered locus">Mbar_A0494</name>
</gene>
<name>FLUC2_METBF</name>